<proteinExistence type="inferred from homology"/>
<reference key="1">
    <citation type="journal article" date="2006" name="PLoS Biol.">
        <title>The genome of deep-sea vent chemolithoautotroph Thiomicrospira crunogena XCL-2.</title>
        <authorList>
            <person name="Scott K.M."/>
            <person name="Sievert S.M."/>
            <person name="Abril F.N."/>
            <person name="Ball L.A."/>
            <person name="Barrett C.J."/>
            <person name="Blake R.A."/>
            <person name="Boller A.J."/>
            <person name="Chain P.S.G."/>
            <person name="Clark J.A."/>
            <person name="Davis C.R."/>
            <person name="Detter C."/>
            <person name="Do K.F."/>
            <person name="Dobrinski K.P."/>
            <person name="Faza B.I."/>
            <person name="Fitzpatrick K.A."/>
            <person name="Freyermuth S.K."/>
            <person name="Harmer T.L."/>
            <person name="Hauser L.J."/>
            <person name="Huegler M."/>
            <person name="Kerfeld C.A."/>
            <person name="Klotz M.G."/>
            <person name="Kong W.W."/>
            <person name="Land M."/>
            <person name="Lapidus A."/>
            <person name="Larimer F.W."/>
            <person name="Longo D.L."/>
            <person name="Lucas S."/>
            <person name="Malfatti S.A."/>
            <person name="Massey S.E."/>
            <person name="Martin D.D."/>
            <person name="McCuddin Z."/>
            <person name="Meyer F."/>
            <person name="Moore J.L."/>
            <person name="Ocampo L.H. Jr."/>
            <person name="Paul J.H."/>
            <person name="Paulsen I.T."/>
            <person name="Reep D.K."/>
            <person name="Ren Q."/>
            <person name="Ross R.L."/>
            <person name="Sato P.Y."/>
            <person name="Thomas P."/>
            <person name="Tinkham L.E."/>
            <person name="Zeruth G.T."/>
        </authorList>
    </citation>
    <scope>NUCLEOTIDE SEQUENCE [LARGE SCALE GENOMIC DNA]</scope>
    <source>
        <strain>DSM 25203 / XCL-2</strain>
    </source>
</reference>
<protein>
    <recommendedName>
        <fullName evidence="1">Small ribosomal subunit protein uS4</fullName>
    </recommendedName>
    <alternativeName>
        <fullName evidence="2">30S ribosomal protein S4</fullName>
    </alternativeName>
</protein>
<dbReference type="EMBL" id="CP000109">
    <property type="protein sequence ID" value="ABB40914.1"/>
    <property type="molecule type" value="Genomic_DNA"/>
</dbReference>
<dbReference type="SMR" id="Q31IV9"/>
<dbReference type="STRING" id="317025.Tcr_0318"/>
<dbReference type="KEGG" id="tcx:Tcr_0318"/>
<dbReference type="eggNOG" id="COG0522">
    <property type="taxonomic scope" value="Bacteria"/>
</dbReference>
<dbReference type="HOGENOM" id="CLU_092403_0_2_6"/>
<dbReference type="OrthoDB" id="9803672at2"/>
<dbReference type="GO" id="GO:0015935">
    <property type="term" value="C:small ribosomal subunit"/>
    <property type="evidence" value="ECO:0007669"/>
    <property type="project" value="InterPro"/>
</dbReference>
<dbReference type="GO" id="GO:0019843">
    <property type="term" value="F:rRNA binding"/>
    <property type="evidence" value="ECO:0007669"/>
    <property type="project" value="UniProtKB-UniRule"/>
</dbReference>
<dbReference type="GO" id="GO:0003735">
    <property type="term" value="F:structural constituent of ribosome"/>
    <property type="evidence" value="ECO:0007669"/>
    <property type="project" value="InterPro"/>
</dbReference>
<dbReference type="GO" id="GO:0042274">
    <property type="term" value="P:ribosomal small subunit biogenesis"/>
    <property type="evidence" value="ECO:0007669"/>
    <property type="project" value="TreeGrafter"/>
</dbReference>
<dbReference type="GO" id="GO:0006412">
    <property type="term" value="P:translation"/>
    <property type="evidence" value="ECO:0007669"/>
    <property type="project" value="UniProtKB-UniRule"/>
</dbReference>
<dbReference type="CDD" id="cd00165">
    <property type="entry name" value="S4"/>
    <property type="match status" value="1"/>
</dbReference>
<dbReference type="FunFam" id="1.10.1050.10:FF:000001">
    <property type="entry name" value="30S ribosomal protein S4"/>
    <property type="match status" value="1"/>
</dbReference>
<dbReference type="FunFam" id="3.10.290.10:FF:000001">
    <property type="entry name" value="30S ribosomal protein S4"/>
    <property type="match status" value="1"/>
</dbReference>
<dbReference type="Gene3D" id="1.10.1050.10">
    <property type="entry name" value="Ribosomal Protein S4 Delta 41, Chain A, domain 1"/>
    <property type="match status" value="1"/>
</dbReference>
<dbReference type="Gene3D" id="3.10.290.10">
    <property type="entry name" value="RNA-binding S4 domain"/>
    <property type="match status" value="1"/>
</dbReference>
<dbReference type="HAMAP" id="MF_01306_B">
    <property type="entry name" value="Ribosomal_uS4_B"/>
    <property type="match status" value="1"/>
</dbReference>
<dbReference type="InterPro" id="IPR022801">
    <property type="entry name" value="Ribosomal_uS4"/>
</dbReference>
<dbReference type="InterPro" id="IPR005709">
    <property type="entry name" value="Ribosomal_uS4_bac-type"/>
</dbReference>
<dbReference type="InterPro" id="IPR018079">
    <property type="entry name" value="Ribosomal_uS4_CS"/>
</dbReference>
<dbReference type="InterPro" id="IPR001912">
    <property type="entry name" value="Ribosomal_uS4_N"/>
</dbReference>
<dbReference type="InterPro" id="IPR002942">
    <property type="entry name" value="S4_RNA-bd"/>
</dbReference>
<dbReference type="InterPro" id="IPR036986">
    <property type="entry name" value="S4_RNA-bd_sf"/>
</dbReference>
<dbReference type="NCBIfam" id="NF003717">
    <property type="entry name" value="PRK05327.1"/>
    <property type="match status" value="1"/>
</dbReference>
<dbReference type="NCBIfam" id="TIGR01017">
    <property type="entry name" value="rpsD_bact"/>
    <property type="match status" value="1"/>
</dbReference>
<dbReference type="PANTHER" id="PTHR11831">
    <property type="entry name" value="30S 40S RIBOSOMAL PROTEIN"/>
    <property type="match status" value="1"/>
</dbReference>
<dbReference type="PANTHER" id="PTHR11831:SF4">
    <property type="entry name" value="SMALL RIBOSOMAL SUBUNIT PROTEIN US4M"/>
    <property type="match status" value="1"/>
</dbReference>
<dbReference type="Pfam" id="PF00163">
    <property type="entry name" value="Ribosomal_S4"/>
    <property type="match status" value="1"/>
</dbReference>
<dbReference type="Pfam" id="PF01479">
    <property type="entry name" value="S4"/>
    <property type="match status" value="1"/>
</dbReference>
<dbReference type="SMART" id="SM01390">
    <property type="entry name" value="Ribosomal_S4"/>
    <property type="match status" value="1"/>
</dbReference>
<dbReference type="SMART" id="SM00363">
    <property type="entry name" value="S4"/>
    <property type="match status" value="1"/>
</dbReference>
<dbReference type="SUPFAM" id="SSF55174">
    <property type="entry name" value="Alpha-L RNA-binding motif"/>
    <property type="match status" value="1"/>
</dbReference>
<dbReference type="PROSITE" id="PS00632">
    <property type="entry name" value="RIBOSOMAL_S4"/>
    <property type="match status" value="1"/>
</dbReference>
<dbReference type="PROSITE" id="PS50889">
    <property type="entry name" value="S4"/>
    <property type="match status" value="1"/>
</dbReference>
<comment type="function">
    <text evidence="1">One of the primary rRNA binding proteins, it binds directly to 16S rRNA where it nucleates assembly of the body of the 30S subunit.</text>
</comment>
<comment type="function">
    <text evidence="1">With S5 and S12 plays an important role in translational accuracy.</text>
</comment>
<comment type="subunit">
    <text evidence="1">Part of the 30S ribosomal subunit. Contacts protein S5. The interaction surface between S4 and S5 is involved in control of translational fidelity.</text>
</comment>
<comment type="similarity">
    <text evidence="1">Belongs to the universal ribosomal protein uS4 family.</text>
</comment>
<organism>
    <name type="scientific">Hydrogenovibrio crunogenus (strain DSM 25203 / XCL-2)</name>
    <name type="common">Thiomicrospira crunogena</name>
    <dbReference type="NCBI Taxonomy" id="317025"/>
    <lineage>
        <taxon>Bacteria</taxon>
        <taxon>Pseudomonadati</taxon>
        <taxon>Pseudomonadota</taxon>
        <taxon>Gammaproteobacteria</taxon>
        <taxon>Thiotrichales</taxon>
        <taxon>Piscirickettsiaceae</taxon>
        <taxon>Hydrogenovibrio</taxon>
    </lineage>
</organism>
<keyword id="KW-0687">Ribonucleoprotein</keyword>
<keyword id="KW-0689">Ribosomal protein</keyword>
<keyword id="KW-0694">RNA-binding</keyword>
<keyword id="KW-0699">rRNA-binding</keyword>
<sequence>MARYIGPKCKLSRREGTDLFLKSGVRSIESKCKIDQLPGQHGAGRKRVTEYGLQLREKQKVRRIYGVLEKKFRLYYKEADRRKGSTGVNLLQLLESRLDNVVYRMGFASTRAEARQLVSHKSIQVNGQSVNIPSYEVSAGDVISIREKSRNQSRIAAALELSAQAGNVGWVEVDSSKFEGVFKTVPDRSDLSADISENLIVELYSK</sequence>
<accession>Q31IV9</accession>
<feature type="chain" id="PRO_0000228936" description="Small ribosomal subunit protein uS4">
    <location>
        <begin position="1"/>
        <end position="206"/>
    </location>
</feature>
<feature type="domain" description="S4 RNA-binding" evidence="1">
    <location>
        <begin position="96"/>
        <end position="156"/>
    </location>
</feature>
<gene>
    <name evidence="1" type="primary">rpsD</name>
    <name type="ordered locus">Tcr_0318</name>
</gene>
<evidence type="ECO:0000255" key="1">
    <source>
        <dbReference type="HAMAP-Rule" id="MF_01306"/>
    </source>
</evidence>
<evidence type="ECO:0000305" key="2"/>
<name>RS4_HYDCU</name>